<proteinExistence type="inferred from homology"/>
<accession>Q4FUE4</accession>
<reference key="1">
    <citation type="journal article" date="2010" name="Appl. Environ. Microbiol.">
        <title>The genome sequence of Psychrobacter arcticus 273-4, a psychroactive Siberian permafrost bacterium, reveals mechanisms for adaptation to low-temperature growth.</title>
        <authorList>
            <person name="Ayala-del-Rio H.L."/>
            <person name="Chain P.S."/>
            <person name="Grzymski J.J."/>
            <person name="Ponder M.A."/>
            <person name="Ivanova N."/>
            <person name="Bergholz P.W."/>
            <person name="Di Bartolo G."/>
            <person name="Hauser L."/>
            <person name="Land M."/>
            <person name="Bakermans C."/>
            <person name="Rodrigues D."/>
            <person name="Klappenbach J."/>
            <person name="Zarka D."/>
            <person name="Larimer F."/>
            <person name="Richardson P."/>
            <person name="Murray A."/>
            <person name="Thomashow M."/>
            <person name="Tiedje J.M."/>
        </authorList>
    </citation>
    <scope>NUCLEOTIDE SEQUENCE [LARGE SCALE GENOMIC DNA]</scope>
    <source>
        <strain>DSM 17307 / VKM B-2377 / 273-4</strain>
    </source>
</reference>
<protein>
    <recommendedName>
        <fullName evidence="1">Large ribosomal subunit protein uL5</fullName>
    </recommendedName>
    <alternativeName>
        <fullName evidence="2">50S ribosomal protein L5</fullName>
    </alternativeName>
</protein>
<sequence length="178" mass="19855">MARLKSLYNEELKQQIKEELGLANVMQVPKITKITLNMGVGGASQDKKLLEGAVADMTAIAGQKPVVTKARKSVAGFKIREEWPIGCKVTLRGEQMYEFLDRLVAIAIPRIRDFRGFSPKAFDGRGNYSLGIKEQIVFPEVDFDKIDRIRGMDVTITTSAQSDEEGRALLKAFGFPFK</sequence>
<gene>
    <name evidence="1" type="primary">rplE</name>
    <name type="ordered locus">Psyc_0501</name>
</gene>
<keyword id="KW-1185">Reference proteome</keyword>
<keyword id="KW-0687">Ribonucleoprotein</keyword>
<keyword id="KW-0689">Ribosomal protein</keyword>
<keyword id="KW-0694">RNA-binding</keyword>
<keyword id="KW-0699">rRNA-binding</keyword>
<keyword id="KW-0820">tRNA-binding</keyword>
<organism>
    <name type="scientific">Psychrobacter arcticus (strain DSM 17307 / VKM B-2377 / 273-4)</name>
    <dbReference type="NCBI Taxonomy" id="259536"/>
    <lineage>
        <taxon>Bacteria</taxon>
        <taxon>Pseudomonadati</taxon>
        <taxon>Pseudomonadota</taxon>
        <taxon>Gammaproteobacteria</taxon>
        <taxon>Moraxellales</taxon>
        <taxon>Moraxellaceae</taxon>
        <taxon>Psychrobacter</taxon>
    </lineage>
</organism>
<feature type="chain" id="PRO_0000243046" description="Large ribosomal subunit protein uL5">
    <location>
        <begin position="1"/>
        <end position="178"/>
    </location>
</feature>
<name>RL5_PSYA2</name>
<dbReference type="EMBL" id="CP000082">
    <property type="protein sequence ID" value="AAZ18364.1"/>
    <property type="molecule type" value="Genomic_DNA"/>
</dbReference>
<dbReference type="RefSeq" id="WP_011279797.1">
    <property type="nucleotide sequence ID" value="NC_007204.1"/>
</dbReference>
<dbReference type="SMR" id="Q4FUE4"/>
<dbReference type="STRING" id="259536.Psyc_0501"/>
<dbReference type="KEGG" id="par:Psyc_0501"/>
<dbReference type="eggNOG" id="COG0094">
    <property type="taxonomic scope" value="Bacteria"/>
</dbReference>
<dbReference type="HOGENOM" id="CLU_061015_2_1_6"/>
<dbReference type="OrthoDB" id="9806626at2"/>
<dbReference type="Proteomes" id="UP000000546">
    <property type="component" value="Chromosome"/>
</dbReference>
<dbReference type="GO" id="GO:1990904">
    <property type="term" value="C:ribonucleoprotein complex"/>
    <property type="evidence" value="ECO:0007669"/>
    <property type="project" value="UniProtKB-KW"/>
</dbReference>
<dbReference type="GO" id="GO:0005840">
    <property type="term" value="C:ribosome"/>
    <property type="evidence" value="ECO:0007669"/>
    <property type="project" value="UniProtKB-KW"/>
</dbReference>
<dbReference type="GO" id="GO:0019843">
    <property type="term" value="F:rRNA binding"/>
    <property type="evidence" value="ECO:0007669"/>
    <property type="project" value="UniProtKB-UniRule"/>
</dbReference>
<dbReference type="GO" id="GO:0003735">
    <property type="term" value="F:structural constituent of ribosome"/>
    <property type="evidence" value="ECO:0007669"/>
    <property type="project" value="InterPro"/>
</dbReference>
<dbReference type="GO" id="GO:0000049">
    <property type="term" value="F:tRNA binding"/>
    <property type="evidence" value="ECO:0007669"/>
    <property type="project" value="UniProtKB-UniRule"/>
</dbReference>
<dbReference type="GO" id="GO:0006412">
    <property type="term" value="P:translation"/>
    <property type="evidence" value="ECO:0007669"/>
    <property type="project" value="UniProtKB-UniRule"/>
</dbReference>
<dbReference type="FunFam" id="3.30.1440.10:FF:000001">
    <property type="entry name" value="50S ribosomal protein L5"/>
    <property type="match status" value="1"/>
</dbReference>
<dbReference type="Gene3D" id="3.30.1440.10">
    <property type="match status" value="1"/>
</dbReference>
<dbReference type="HAMAP" id="MF_01333_B">
    <property type="entry name" value="Ribosomal_uL5_B"/>
    <property type="match status" value="1"/>
</dbReference>
<dbReference type="InterPro" id="IPR002132">
    <property type="entry name" value="Ribosomal_uL5"/>
</dbReference>
<dbReference type="InterPro" id="IPR020930">
    <property type="entry name" value="Ribosomal_uL5_bac-type"/>
</dbReference>
<dbReference type="InterPro" id="IPR031309">
    <property type="entry name" value="Ribosomal_uL5_C"/>
</dbReference>
<dbReference type="InterPro" id="IPR020929">
    <property type="entry name" value="Ribosomal_uL5_CS"/>
</dbReference>
<dbReference type="InterPro" id="IPR022803">
    <property type="entry name" value="Ribosomal_uL5_dom_sf"/>
</dbReference>
<dbReference type="InterPro" id="IPR031310">
    <property type="entry name" value="Ribosomal_uL5_N"/>
</dbReference>
<dbReference type="NCBIfam" id="NF000585">
    <property type="entry name" value="PRK00010.1"/>
    <property type="match status" value="1"/>
</dbReference>
<dbReference type="PANTHER" id="PTHR11994">
    <property type="entry name" value="60S RIBOSOMAL PROTEIN L11-RELATED"/>
    <property type="match status" value="1"/>
</dbReference>
<dbReference type="Pfam" id="PF00281">
    <property type="entry name" value="Ribosomal_L5"/>
    <property type="match status" value="1"/>
</dbReference>
<dbReference type="Pfam" id="PF00673">
    <property type="entry name" value="Ribosomal_L5_C"/>
    <property type="match status" value="1"/>
</dbReference>
<dbReference type="PIRSF" id="PIRSF002161">
    <property type="entry name" value="Ribosomal_L5"/>
    <property type="match status" value="1"/>
</dbReference>
<dbReference type="SUPFAM" id="SSF55282">
    <property type="entry name" value="RL5-like"/>
    <property type="match status" value="1"/>
</dbReference>
<dbReference type="PROSITE" id="PS00358">
    <property type="entry name" value="RIBOSOMAL_L5"/>
    <property type="match status" value="1"/>
</dbReference>
<evidence type="ECO:0000255" key="1">
    <source>
        <dbReference type="HAMAP-Rule" id="MF_01333"/>
    </source>
</evidence>
<evidence type="ECO:0000305" key="2"/>
<comment type="function">
    <text evidence="1">This is one of the proteins that bind and probably mediate the attachment of the 5S RNA into the large ribosomal subunit, where it forms part of the central protuberance. In the 70S ribosome it contacts protein S13 of the 30S subunit (bridge B1b), connecting the 2 subunits; this bridge is implicated in subunit movement. Contacts the P site tRNA; the 5S rRNA and some of its associated proteins might help stabilize positioning of ribosome-bound tRNAs.</text>
</comment>
<comment type="subunit">
    <text evidence="1">Part of the 50S ribosomal subunit; part of the 5S rRNA/L5/L18/L25 subcomplex. Contacts the 5S rRNA and the P site tRNA. Forms a bridge to the 30S subunit in the 70S ribosome.</text>
</comment>
<comment type="similarity">
    <text evidence="1">Belongs to the universal ribosomal protein uL5 family.</text>
</comment>